<sequence length="470" mass="53820">MLTIYNTLTRKKEEFKPLHPGVVNMYVCGPTVYNYIHIGNARSAIAFDTVRRYLEFKGYKVNYVSNFTDVDDKMIKAAAEQGITVPQLAEKYINAFMEDTAAINIEPATLHPRATENITEIIKFVQGLIEKGYAYPKDGDVYYRARKFNHYGQLSGQSLDDLEVGASEHVSADEVNKKEDPLDFALWKAAKPGEISWDSPWGKGRPGWHIECSVMSTKYLGKTIDIHAGGQDLEFPHHENEIAQSEAETGQKFVRYWMHNGFVTIGKDNEKMSKSLHNFITVHEIIKEVDPQVLRFFMATTQYRRPIQYSQANLTDAQNNLNHIQTAFDNLTYREQDADEGDVQEVTDRLEQFHHQFITAMDDDINVQNGIATVYELVKYANVYAQQDNVSLGAIQAIKKELVELMSIFGVKLEASDNQINDEKIKQLIEERNIARKNKDFARSDEIRDNLKKQGIILEDTPQGTRYKKE</sequence>
<protein>
    <recommendedName>
        <fullName evidence="1">Cysteine--tRNA ligase</fullName>
        <ecNumber evidence="1">6.1.1.16</ecNumber>
    </recommendedName>
    <alternativeName>
        <fullName evidence="1">Cysteinyl-tRNA synthetase</fullName>
        <shortName evidence="1">CysRS</shortName>
    </alternativeName>
</protein>
<feature type="chain" id="PRO_1000074618" description="Cysteine--tRNA ligase">
    <location>
        <begin position="1"/>
        <end position="470"/>
    </location>
</feature>
<feature type="short sequence motif" description="'HIGH' region">
    <location>
        <begin position="30"/>
        <end position="40"/>
    </location>
</feature>
<feature type="short sequence motif" description="'KMSKS' region">
    <location>
        <begin position="271"/>
        <end position="275"/>
    </location>
</feature>
<feature type="binding site" evidence="1">
    <location>
        <position position="28"/>
    </location>
    <ligand>
        <name>Zn(2+)</name>
        <dbReference type="ChEBI" id="CHEBI:29105"/>
    </ligand>
</feature>
<feature type="binding site" evidence="1">
    <location>
        <position position="212"/>
    </location>
    <ligand>
        <name>Zn(2+)</name>
        <dbReference type="ChEBI" id="CHEBI:29105"/>
    </ligand>
</feature>
<feature type="binding site" evidence="1">
    <location>
        <position position="237"/>
    </location>
    <ligand>
        <name>Zn(2+)</name>
        <dbReference type="ChEBI" id="CHEBI:29105"/>
    </ligand>
</feature>
<feature type="binding site" evidence="1">
    <location>
        <position position="241"/>
    </location>
    <ligand>
        <name>Zn(2+)</name>
        <dbReference type="ChEBI" id="CHEBI:29105"/>
    </ligand>
</feature>
<feature type="binding site" evidence="1">
    <location>
        <position position="274"/>
    </location>
    <ligand>
        <name>ATP</name>
        <dbReference type="ChEBI" id="CHEBI:30616"/>
    </ligand>
</feature>
<keyword id="KW-0030">Aminoacyl-tRNA synthetase</keyword>
<keyword id="KW-0067">ATP-binding</keyword>
<keyword id="KW-0963">Cytoplasm</keyword>
<keyword id="KW-0436">Ligase</keyword>
<keyword id="KW-0479">Metal-binding</keyword>
<keyword id="KW-0547">Nucleotide-binding</keyword>
<keyword id="KW-0648">Protein biosynthesis</keyword>
<keyword id="KW-1185">Reference proteome</keyword>
<keyword id="KW-0862">Zinc</keyword>
<dbReference type="EC" id="6.1.1.16" evidence="1"/>
<dbReference type="EMBL" id="CP000705">
    <property type="protein sequence ID" value="ABQ82573.1"/>
    <property type="molecule type" value="Genomic_DNA"/>
</dbReference>
<dbReference type="RefSeq" id="WP_003673191.1">
    <property type="nucleotide sequence ID" value="NC_009513.1"/>
</dbReference>
<dbReference type="SMR" id="A5VI99"/>
<dbReference type="STRING" id="557436.Lreu_0303"/>
<dbReference type="KEGG" id="lre:Lreu_0303"/>
<dbReference type="eggNOG" id="COG0215">
    <property type="taxonomic scope" value="Bacteria"/>
</dbReference>
<dbReference type="HOGENOM" id="CLU_013528_0_1_9"/>
<dbReference type="Proteomes" id="UP000001991">
    <property type="component" value="Chromosome"/>
</dbReference>
<dbReference type="GO" id="GO:0005829">
    <property type="term" value="C:cytosol"/>
    <property type="evidence" value="ECO:0007669"/>
    <property type="project" value="TreeGrafter"/>
</dbReference>
<dbReference type="GO" id="GO:0005524">
    <property type="term" value="F:ATP binding"/>
    <property type="evidence" value="ECO:0007669"/>
    <property type="project" value="UniProtKB-UniRule"/>
</dbReference>
<dbReference type="GO" id="GO:0004817">
    <property type="term" value="F:cysteine-tRNA ligase activity"/>
    <property type="evidence" value="ECO:0007669"/>
    <property type="project" value="UniProtKB-UniRule"/>
</dbReference>
<dbReference type="GO" id="GO:0008270">
    <property type="term" value="F:zinc ion binding"/>
    <property type="evidence" value="ECO:0007669"/>
    <property type="project" value="UniProtKB-UniRule"/>
</dbReference>
<dbReference type="GO" id="GO:0006423">
    <property type="term" value="P:cysteinyl-tRNA aminoacylation"/>
    <property type="evidence" value="ECO:0007669"/>
    <property type="project" value="UniProtKB-UniRule"/>
</dbReference>
<dbReference type="CDD" id="cd00672">
    <property type="entry name" value="CysRS_core"/>
    <property type="match status" value="1"/>
</dbReference>
<dbReference type="FunFam" id="3.40.50.620:FF:000009">
    <property type="entry name" value="Cysteine--tRNA ligase"/>
    <property type="match status" value="1"/>
</dbReference>
<dbReference type="Gene3D" id="1.20.120.1910">
    <property type="entry name" value="Cysteine-tRNA ligase, C-terminal anti-codon recognition domain"/>
    <property type="match status" value="1"/>
</dbReference>
<dbReference type="Gene3D" id="3.40.50.620">
    <property type="entry name" value="HUPs"/>
    <property type="match status" value="1"/>
</dbReference>
<dbReference type="HAMAP" id="MF_00041">
    <property type="entry name" value="Cys_tRNA_synth"/>
    <property type="match status" value="1"/>
</dbReference>
<dbReference type="InterPro" id="IPR015803">
    <property type="entry name" value="Cys-tRNA-ligase"/>
</dbReference>
<dbReference type="InterPro" id="IPR015273">
    <property type="entry name" value="Cys-tRNA-synt_Ia_DALR"/>
</dbReference>
<dbReference type="InterPro" id="IPR024909">
    <property type="entry name" value="Cys-tRNA/MSH_ligase"/>
</dbReference>
<dbReference type="InterPro" id="IPR056411">
    <property type="entry name" value="CysS_C"/>
</dbReference>
<dbReference type="InterPro" id="IPR014729">
    <property type="entry name" value="Rossmann-like_a/b/a_fold"/>
</dbReference>
<dbReference type="InterPro" id="IPR032678">
    <property type="entry name" value="tRNA-synt_1_cat_dom"/>
</dbReference>
<dbReference type="InterPro" id="IPR009080">
    <property type="entry name" value="tRNAsynth_Ia_anticodon-bd"/>
</dbReference>
<dbReference type="NCBIfam" id="TIGR00435">
    <property type="entry name" value="cysS"/>
    <property type="match status" value="1"/>
</dbReference>
<dbReference type="PANTHER" id="PTHR10890:SF3">
    <property type="entry name" value="CYSTEINE--TRNA LIGASE, CYTOPLASMIC"/>
    <property type="match status" value="1"/>
</dbReference>
<dbReference type="PANTHER" id="PTHR10890">
    <property type="entry name" value="CYSTEINYL-TRNA SYNTHETASE"/>
    <property type="match status" value="1"/>
</dbReference>
<dbReference type="Pfam" id="PF23493">
    <property type="entry name" value="CysS_C"/>
    <property type="match status" value="1"/>
</dbReference>
<dbReference type="Pfam" id="PF09190">
    <property type="entry name" value="DALR_2"/>
    <property type="match status" value="1"/>
</dbReference>
<dbReference type="Pfam" id="PF01406">
    <property type="entry name" value="tRNA-synt_1e"/>
    <property type="match status" value="1"/>
</dbReference>
<dbReference type="PRINTS" id="PR00983">
    <property type="entry name" value="TRNASYNTHCYS"/>
</dbReference>
<dbReference type="SMART" id="SM00840">
    <property type="entry name" value="DALR_2"/>
    <property type="match status" value="1"/>
</dbReference>
<dbReference type="SUPFAM" id="SSF47323">
    <property type="entry name" value="Anticodon-binding domain of a subclass of class I aminoacyl-tRNA synthetases"/>
    <property type="match status" value="1"/>
</dbReference>
<dbReference type="SUPFAM" id="SSF52374">
    <property type="entry name" value="Nucleotidylyl transferase"/>
    <property type="match status" value="1"/>
</dbReference>
<comment type="catalytic activity">
    <reaction evidence="1">
        <text>tRNA(Cys) + L-cysteine + ATP = L-cysteinyl-tRNA(Cys) + AMP + diphosphate</text>
        <dbReference type="Rhea" id="RHEA:17773"/>
        <dbReference type="Rhea" id="RHEA-COMP:9661"/>
        <dbReference type="Rhea" id="RHEA-COMP:9679"/>
        <dbReference type="ChEBI" id="CHEBI:30616"/>
        <dbReference type="ChEBI" id="CHEBI:33019"/>
        <dbReference type="ChEBI" id="CHEBI:35235"/>
        <dbReference type="ChEBI" id="CHEBI:78442"/>
        <dbReference type="ChEBI" id="CHEBI:78517"/>
        <dbReference type="ChEBI" id="CHEBI:456215"/>
        <dbReference type="EC" id="6.1.1.16"/>
    </reaction>
</comment>
<comment type="cofactor">
    <cofactor evidence="1">
        <name>Zn(2+)</name>
        <dbReference type="ChEBI" id="CHEBI:29105"/>
    </cofactor>
    <text evidence="1">Binds 1 zinc ion per subunit.</text>
</comment>
<comment type="subunit">
    <text evidence="1">Monomer.</text>
</comment>
<comment type="subcellular location">
    <subcellularLocation>
        <location evidence="1">Cytoplasm</location>
    </subcellularLocation>
</comment>
<comment type="similarity">
    <text evidence="1">Belongs to the class-I aminoacyl-tRNA synthetase family.</text>
</comment>
<proteinExistence type="inferred from homology"/>
<name>SYC_LIMRD</name>
<gene>
    <name evidence="1" type="primary">cysS</name>
    <name type="ordered locus">Lreu_0303</name>
</gene>
<reference key="1">
    <citation type="journal article" date="2011" name="PLoS Genet.">
        <title>The evolution of host specialization in the vertebrate gut symbiont Lactobacillus reuteri.</title>
        <authorList>
            <person name="Frese S.A."/>
            <person name="Benson A.K."/>
            <person name="Tannock G.W."/>
            <person name="Loach D.M."/>
            <person name="Kim J."/>
            <person name="Zhang M."/>
            <person name="Oh P.L."/>
            <person name="Heng N.C."/>
            <person name="Patil P.B."/>
            <person name="Juge N."/>
            <person name="Mackenzie D.A."/>
            <person name="Pearson B.M."/>
            <person name="Lapidus A."/>
            <person name="Dalin E."/>
            <person name="Tice H."/>
            <person name="Goltsman E."/>
            <person name="Land M."/>
            <person name="Hauser L."/>
            <person name="Ivanova N."/>
            <person name="Kyrpides N.C."/>
            <person name="Walter J."/>
        </authorList>
    </citation>
    <scope>NUCLEOTIDE SEQUENCE [LARGE SCALE GENOMIC DNA]</scope>
    <source>
        <strain>DSM 20016</strain>
    </source>
</reference>
<evidence type="ECO:0000255" key="1">
    <source>
        <dbReference type="HAMAP-Rule" id="MF_00041"/>
    </source>
</evidence>
<organism>
    <name type="scientific">Limosilactobacillus reuteri (strain DSM 20016)</name>
    <name type="common">Lactobacillus reuteri</name>
    <dbReference type="NCBI Taxonomy" id="557436"/>
    <lineage>
        <taxon>Bacteria</taxon>
        <taxon>Bacillati</taxon>
        <taxon>Bacillota</taxon>
        <taxon>Bacilli</taxon>
        <taxon>Lactobacillales</taxon>
        <taxon>Lactobacillaceae</taxon>
        <taxon>Limosilactobacillus</taxon>
    </lineage>
</organism>
<accession>A5VI99</accession>